<reference key="1">
    <citation type="journal article" date="2004" name="Proc. Natl. Acad. Sci. U.S.A.">
        <title>Genome sequence of the enterobacterial phytopathogen Erwinia carotovora subsp. atroseptica and characterization of virulence factors.</title>
        <authorList>
            <person name="Bell K.S."/>
            <person name="Sebaihia M."/>
            <person name="Pritchard L."/>
            <person name="Holden M.T.G."/>
            <person name="Hyman L.J."/>
            <person name="Holeva M.C."/>
            <person name="Thomson N.R."/>
            <person name="Bentley S.D."/>
            <person name="Churcher L.J.C."/>
            <person name="Mungall K."/>
            <person name="Atkin R."/>
            <person name="Bason N."/>
            <person name="Brooks K."/>
            <person name="Chillingworth T."/>
            <person name="Clark K."/>
            <person name="Doggett J."/>
            <person name="Fraser A."/>
            <person name="Hance Z."/>
            <person name="Hauser H."/>
            <person name="Jagels K."/>
            <person name="Moule S."/>
            <person name="Norbertczak H."/>
            <person name="Ormond D."/>
            <person name="Price C."/>
            <person name="Quail M.A."/>
            <person name="Sanders M."/>
            <person name="Walker D."/>
            <person name="Whitehead S."/>
            <person name="Salmond G.P.C."/>
            <person name="Birch P.R.J."/>
            <person name="Parkhill J."/>
            <person name="Toth I.K."/>
        </authorList>
    </citation>
    <scope>NUCLEOTIDE SEQUENCE [LARGE SCALE GENOMIC DNA]</scope>
    <source>
        <strain>SCRI 1043 / ATCC BAA-672</strain>
    </source>
</reference>
<gene>
    <name evidence="1" type="primary">asnS</name>
    <name type="ordered locus">ECA2541</name>
</gene>
<organism>
    <name type="scientific">Pectobacterium atrosepticum (strain SCRI 1043 / ATCC BAA-672)</name>
    <name type="common">Erwinia carotovora subsp. atroseptica</name>
    <dbReference type="NCBI Taxonomy" id="218491"/>
    <lineage>
        <taxon>Bacteria</taxon>
        <taxon>Pseudomonadati</taxon>
        <taxon>Pseudomonadota</taxon>
        <taxon>Gammaproteobacteria</taxon>
        <taxon>Enterobacterales</taxon>
        <taxon>Pectobacteriaceae</taxon>
        <taxon>Pectobacterium</taxon>
    </lineage>
</organism>
<keyword id="KW-0030">Aminoacyl-tRNA synthetase</keyword>
<keyword id="KW-0067">ATP-binding</keyword>
<keyword id="KW-0963">Cytoplasm</keyword>
<keyword id="KW-0436">Ligase</keyword>
<keyword id="KW-0547">Nucleotide-binding</keyword>
<keyword id="KW-0648">Protein biosynthesis</keyword>
<keyword id="KW-1185">Reference proteome</keyword>
<evidence type="ECO:0000255" key="1">
    <source>
        <dbReference type="HAMAP-Rule" id="MF_00534"/>
    </source>
</evidence>
<proteinExistence type="inferred from homology"/>
<feature type="chain" id="PRO_0000176410" description="Asparagine--tRNA ligase">
    <location>
        <begin position="1"/>
        <end position="466"/>
    </location>
</feature>
<protein>
    <recommendedName>
        <fullName evidence="1">Asparagine--tRNA ligase</fullName>
        <ecNumber evidence="1">6.1.1.22</ecNumber>
    </recommendedName>
    <alternativeName>
        <fullName evidence="1">Asparaginyl-tRNA synthetase</fullName>
        <shortName evidence="1">AsnRS</shortName>
    </alternativeName>
</protein>
<name>SYN_PECAS</name>
<dbReference type="EC" id="6.1.1.22" evidence="1"/>
<dbReference type="EMBL" id="BX950851">
    <property type="protein sequence ID" value="CAG75440.1"/>
    <property type="molecule type" value="Genomic_DNA"/>
</dbReference>
<dbReference type="RefSeq" id="WP_011094086.1">
    <property type="nucleotide sequence ID" value="NC_004547.2"/>
</dbReference>
<dbReference type="SMR" id="Q6D453"/>
<dbReference type="STRING" id="218491.ECA2541"/>
<dbReference type="GeneID" id="57208762"/>
<dbReference type="KEGG" id="eca:ECA2541"/>
<dbReference type="PATRIC" id="fig|218491.5.peg.2573"/>
<dbReference type="eggNOG" id="COG0017">
    <property type="taxonomic scope" value="Bacteria"/>
</dbReference>
<dbReference type="HOGENOM" id="CLU_004553_2_0_6"/>
<dbReference type="OrthoDB" id="9762036at2"/>
<dbReference type="Proteomes" id="UP000007966">
    <property type="component" value="Chromosome"/>
</dbReference>
<dbReference type="GO" id="GO:0005737">
    <property type="term" value="C:cytoplasm"/>
    <property type="evidence" value="ECO:0007669"/>
    <property type="project" value="UniProtKB-SubCell"/>
</dbReference>
<dbReference type="GO" id="GO:0004816">
    <property type="term" value="F:asparagine-tRNA ligase activity"/>
    <property type="evidence" value="ECO:0007669"/>
    <property type="project" value="UniProtKB-UniRule"/>
</dbReference>
<dbReference type="GO" id="GO:0005524">
    <property type="term" value="F:ATP binding"/>
    <property type="evidence" value="ECO:0007669"/>
    <property type="project" value="UniProtKB-UniRule"/>
</dbReference>
<dbReference type="GO" id="GO:0003676">
    <property type="term" value="F:nucleic acid binding"/>
    <property type="evidence" value="ECO:0007669"/>
    <property type="project" value="InterPro"/>
</dbReference>
<dbReference type="GO" id="GO:0006421">
    <property type="term" value="P:asparaginyl-tRNA aminoacylation"/>
    <property type="evidence" value="ECO:0007669"/>
    <property type="project" value="UniProtKB-UniRule"/>
</dbReference>
<dbReference type="CDD" id="cd00776">
    <property type="entry name" value="AsxRS_core"/>
    <property type="match status" value="1"/>
</dbReference>
<dbReference type="CDD" id="cd04318">
    <property type="entry name" value="EcAsnRS_like_N"/>
    <property type="match status" value="1"/>
</dbReference>
<dbReference type="FunFam" id="3.30.930.10:FF:000016">
    <property type="entry name" value="Asparagine--tRNA ligase"/>
    <property type="match status" value="1"/>
</dbReference>
<dbReference type="Gene3D" id="3.30.930.10">
    <property type="entry name" value="Bira Bifunctional Protein, Domain 2"/>
    <property type="match status" value="1"/>
</dbReference>
<dbReference type="Gene3D" id="2.40.50.140">
    <property type="entry name" value="Nucleic acid-binding proteins"/>
    <property type="match status" value="1"/>
</dbReference>
<dbReference type="HAMAP" id="MF_00534">
    <property type="entry name" value="Asn_tRNA_synth"/>
    <property type="match status" value="1"/>
</dbReference>
<dbReference type="InterPro" id="IPR004364">
    <property type="entry name" value="Aa-tRNA-synt_II"/>
</dbReference>
<dbReference type="InterPro" id="IPR006195">
    <property type="entry name" value="aa-tRNA-synth_II"/>
</dbReference>
<dbReference type="InterPro" id="IPR045864">
    <property type="entry name" value="aa-tRNA-synth_II/BPL/LPL"/>
</dbReference>
<dbReference type="InterPro" id="IPR004522">
    <property type="entry name" value="Asn-tRNA-ligase"/>
</dbReference>
<dbReference type="InterPro" id="IPR002312">
    <property type="entry name" value="Asp/Asn-tRNA-synth_IIb"/>
</dbReference>
<dbReference type="InterPro" id="IPR012340">
    <property type="entry name" value="NA-bd_OB-fold"/>
</dbReference>
<dbReference type="InterPro" id="IPR004365">
    <property type="entry name" value="NA-bd_OB_tRNA"/>
</dbReference>
<dbReference type="NCBIfam" id="TIGR00457">
    <property type="entry name" value="asnS"/>
    <property type="match status" value="1"/>
</dbReference>
<dbReference type="NCBIfam" id="NF003037">
    <property type="entry name" value="PRK03932.1"/>
    <property type="match status" value="1"/>
</dbReference>
<dbReference type="PANTHER" id="PTHR22594:SF34">
    <property type="entry name" value="ASPARAGINE--TRNA LIGASE, MITOCHONDRIAL-RELATED"/>
    <property type="match status" value="1"/>
</dbReference>
<dbReference type="PANTHER" id="PTHR22594">
    <property type="entry name" value="ASPARTYL/LYSYL-TRNA SYNTHETASE"/>
    <property type="match status" value="1"/>
</dbReference>
<dbReference type="Pfam" id="PF00152">
    <property type="entry name" value="tRNA-synt_2"/>
    <property type="match status" value="1"/>
</dbReference>
<dbReference type="Pfam" id="PF01336">
    <property type="entry name" value="tRNA_anti-codon"/>
    <property type="match status" value="1"/>
</dbReference>
<dbReference type="PRINTS" id="PR01042">
    <property type="entry name" value="TRNASYNTHASP"/>
</dbReference>
<dbReference type="SUPFAM" id="SSF55681">
    <property type="entry name" value="Class II aaRS and biotin synthetases"/>
    <property type="match status" value="1"/>
</dbReference>
<dbReference type="SUPFAM" id="SSF50249">
    <property type="entry name" value="Nucleic acid-binding proteins"/>
    <property type="match status" value="1"/>
</dbReference>
<dbReference type="PROSITE" id="PS50862">
    <property type="entry name" value="AA_TRNA_LIGASE_II"/>
    <property type="match status" value="1"/>
</dbReference>
<comment type="catalytic activity">
    <reaction evidence="1">
        <text>tRNA(Asn) + L-asparagine + ATP = L-asparaginyl-tRNA(Asn) + AMP + diphosphate + H(+)</text>
        <dbReference type="Rhea" id="RHEA:11180"/>
        <dbReference type="Rhea" id="RHEA-COMP:9659"/>
        <dbReference type="Rhea" id="RHEA-COMP:9674"/>
        <dbReference type="ChEBI" id="CHEBI:15378"/>
        <dbReference type="ChEBI" id="CHEBI:30616"/>
        <dbReference type="ChEBI" id="CHEBI:33019"/>
        <dbReference type="ChEBI" id="CHEBI:58048"/>
        <dbReference type="ChEBI" id="CHEBI:78442"/>
        <dbReference type="ChEBI" id="CHEBI:78515"/>
        <dbReference type="ChEBI" id="CHEBI:456215"/>
        <dbReference type="EC" id="6.1.1.22"/>
    </reaction>
</comment>
<comment type="subunit">
    <text evidence="1">Homodimer.</text>
</comment>
<comment type="subcellular location">
    <subcellularLocation>
        <location evidence="1">Cytoplasm</location>
    </subcellularLocation>
</comment>
<comment type="similarity">
    <text evidence="1">Belongs to the class-II aminoacyl-tRNA synthetase family.</text>
</comment>
<sequence length="466" mass="52317">MSVVPVVDVLQGRVAVDSEVTVRGWVRTRRDSKAGISFIAVYDGSCFNPLQAVVNNNLSNYQDDVLRLTTGCSVEITGNVVASPGEGQSFELQATNVNVVGWVDDPDTYPMAAKRHSIEYLREVAHLRPRTNLIGAVARVRHTLAQAIHRFFHENGYFWVSTPLITASDTEGAGEMFRVSTLDMENLPRTEQGKVDFSKDFFGKEAFLTVSGQLNGETYACALSNVYTFGPTFRAENSNTARHLAEFWMIEPEVAFASLDDVAALAENLLKYVFQAVLNERADDMAFFAERVDKEAVTRLEKFVSSDFAQVDYTDAVEILLNCGQQFENPVYWGVDLSSEHERYLAEQHFKAPVVVKNYPKDIKAFYMRMNDDGKTVAAMDVLAPGIGEIIGGSQREERLAALDSRLEEMGLNKEDYWWYRDLRRYGTIPHSGFGLGFERLIAYVTGVQNVRDVIPFPRTPRNASF</sequence>
<accession>Q6D453</accession>